<comment type="function">
    <text evidence="1">Found at the monomer-monomer interface of the photosystem II (PS II) dimer, plays a role in assembly and dimerization of PSII. PSII is a light-driven water plastoquinone oxidoreductase, using light energy to abstract electrons from H(2)O, generating a proton gradient subsequently used for ATP formation.</text>
</comment>
<comment type="subunit">
    <text evidence="1">PSII is composed of 1 copy each of membrane proteins PsbA, PsbB, PsbC, PsbD, PsbE, PsbF, PsbH, PsbI, PsbJ, PsbK, PsbL, PsbM, PsbT, PsbY, PsbZ, Psb30/Ycf12, at least 3 peripheral proteins of the oxygen-evolving complex and a large number of cofactors. It forms dimeric complexes.</text>
</comment>
<comment type="subcellular location">
    <subcellularLocation>
        <location evidence="1">Plastid</location>
        <location evidence="1">Chloroplast thylakoid membrane</location>
        <topology evidence="1">Single-pass membrane protein</topology>
    </subcellularLocation>
</comment>
<comment type="similarity">
    <text evidence="1">Belongs to the PsbT family.</text>
</comment>
<feature type="chain" id="PRO_0000276299" description="Photosystem II reaction center protein T">
    <location>
        <begin position="1"/>
        <end position="35"/>
    </location>
</feature>
<feature type="transmembrane region" description="Helical" evidence="1">
    <location>
        <begin position="3"/>
        <end position="23"/>
    </location>
</feature>
<organism>
    <name type="scientific">Jasminum nudiflorum</name>
    <name type="common">Winter jasmine</name>
    <dbReference type="NCBI Taxonomy" id="126431"/>
    <lineage>
        <taxon>Eukaryota</taxon>
        <taxon>Viridiplantae</taxon>
        <taxon>Streptophyta</taxon>
        <taxon>Embryophyta</taxon>
        <taxon>Tracheophyta</taxon>
        <taxon>Spermatophyta</taxon>
        <taxon>Magnoliopsida</taxon>
        <taxon>eudicotyledons</taxon>
        <taxon>Gunneridae</taxon>
        <taxon>Pentapetalae</taxon>
        <taxon>asterids</taxon>
        <taxon>lamiids</taxon>
        <taxon>Lamiales</taxon>
        <taxon>Oleaceae</taxon>
        <taxon>Jasmineae</taxon>
        <taxon>Jasminum</taxon>
    </lineage>
</organism>
<reference key="1">
    <citation type="journal article" date="2007" name="Mol. Biol. Evol.">
        <title>Gene relocations within chloroplast genomes of Jasminum and Menodora (Oleaceae) are due to multiple, overlapping inversions.</title>
        <authorList>
            <person name="Lee H.-L."/>
            <person name="Jansen R.K."/>
            <person name="Chumley T.W."/>
            <person name="Kim K.-J."/>
        </authorList>
    </citation>
    <scope>NUCLEOTIDE SEQUENCE [LARGE SCALE GENOMIC DNA]</scope>
</reference>
<proteinExistence type="inferred from homology"/>
<accession>Q06RA5</accession>
<gene>
    <name evidence="1" type="primary">psbT</name>
    <name type="ORF">JNC0825</name>
</gene>
<sequence length="35" mass="4045">MEALVYTFLLVSTLGIIFFAIFFREPPKVPTKKVK</sequence>
<protein>
    <recommendedName>
        <fullName evidence="1">Photosystem II reaction center protein T</fullName>
        <shortName evidence="1">PSII-T</shortName>
    </recommendedName>
</protein>
<keyword id="KW-0150">Chloroplast</keyword>
<keyword id="KW-0472">Membrane</keyword>
<keyword id="KW-0602">Photosynthesis</keyword>
<keyword id="KW-0604">Photosystem II</keyword>
<keyword id="KW-0934">Plastid</keyword>
<keyword id="KW-0793">Thylakoid</keyword>
<keyword id="KW-0812">Transmembrane</keyword>
<keyword id="KW-1133">Transmembrane helix</keyword>
<evidence type="ECO:0000255" key="1">
    <source>
        <dbReference type="HAMAP-Rule" id="MF_00808"/>
    </source>
</evidence>
<geneLocation type="chloroplast"/>
<name>PSBT_JASNU</name>
<dbReference type="EMBL" id="DQ673255">
    <property type="protein sequence ID" value="ABG74653.1"/>
    <property type="molecule type" value="Genomic_DNA"/>
</dbReference>
<dbReference type="RefSeq" id="YP_778516.1">
    <property type="nucleotide sequence ID" value="NC_008407.1"/>
</dbReference>
<dbReference type="SMR" id="Q06RA5"/>
<dbReference type="GeneID" id="4319735"/>
<dbReference type="GO" id="GO:0009535">
    <property type="term" value="C:chloroplast thylakoid membrane"/>
    <property type="evidence" value="ECO:0007669"/>
    <property type="project" value="UniProtKB-SubCell"/>
</dbReference>
<dbReference type="GO" id="GO:0009539">
    <property type="term" value="C:photosystem II reaction center"/>
    <property type="evidence" value="ECO:0007669"/>
    <property type="project" value="InterPro"/>
</dbReference>
<dbReference type="GO" id="GO:0015979">
    <property type="term" value="P:photosynthesis"/>
    <property type="evidence" value="ECO:0007669"/>
    <property type="project" value="UniProtKB-UniRule"/>
</dbReference>
<dbReference type="HAMAP" id="MF_00808">
    <property type="entry name" value="PSII_PsbT"/>
    <property type="match status" value="1"/>
</dbReference>
<dbReference type="InterPro" id="IPR001743">
    <property type="entry name" value="PSII_PsbT"/>
</dbReference>
<dbReference type="InterPro" id="IPR037268">
    <property type="entry name" value="PSII_PsbT_sf"/>
</dbReference>
<dbReference type="PANTHER" id="PTHR36411">
    <property type="match status" value="1"/>
</dbReference>
<dbReference type="PANTHER" id="PTHR36411:SF2">
    <property type="entry name" value="PHOTOSYSTEM II REACTION CENTER PROTEIN T"/>
    <property type="match status" value="1"/>
</dbReference>
<dbReference type="Pfam" id="PF01405">
    <property type="entry name" value="PsbT"/>
    <property type="match status" value="1"/>
</dbReference>
<dbReference type="SUPFAM" id="SSF161029">
    <property type="entry name" value="Photosystem II reaction center protein T, PsbT"/>
    <property type="match status" value="1"/>
</dbReference>